<gene>
    <name evidence="1" type="primary">tig</name>
    <name type="ordered locus">LAF_0619</name>
</gene>
<dbReference type="EC" id="5.2.1.8" evidence="1"/>
<dbReference type="EMBL" id="AP008937">
    <property type="protein sequence ID" value="BAG26955.1"/>
    <property type="molecule type" value="Genomic_DNA"/>
</dbReference>
<dbReference type="RefSeq" id="WP_003682058.1">
    <property type="nucleotide sequence ID" value="NC_010610.1"/>
</dbReference>
<dbReference type="SMR" id="B2GBC3"/>
<dbReference type="GeneID" id="83715048"/>
<dbReference type="KEGG" id="lfe:LAF_0619"/>
<dbReference type="eggNOG" id="COG0544">
    <property type="taxonomic scope" value="Bacteria"/>
</dbReference>
<dbReference type="HOGENOM" id="CLU_033058_3_2_9"/>
<dbReference type="Proteomes" id="UP000001697">
    <property type="component" value="Chromosome"/>
</dbReference>
<dbReference type="GO" id="GO:0005737">
    <property type="term" value="C:cytoplasm"/>
    <property type="evidence" value="ECO:0007669"/>
    <property type="project" value="UniProtKB-SubCell"/>
</dbReference>
<dbReference type="GO" id="GO:0003755">
    <property type="term" value="F:peptidyl-prolyl cis-trans isomerase activity"/>
    <property type="evidence" value="ECO:0007669"/>
    <property type="project" value="UniProtKB-UniRule"/>
</dbReference>
<dbReference type="GO" id="GO:0044183">
    <property type="term" value="F:protein folding chaperone"/>
    <property type="evidence" value="ECO:0007669"/>
    <property type="project" value="TreeGrafter"/>
</dbReference>
<dbReference type="GO" id="GO:0043022">
    <property type="term" value="F:ribosome binding"/>
    <property type="evidence" value="ECO:0007669"/>
    <property type="project" value="TreeGrafter"/>
</dbReference>
<dbReference type="GO" id="GO:0051083">
    <property type="term" value="P:'de novo' cotranslational protein folding"/>
    <property type="evidence" value="ECO:0007669"/>
    <property type="project" value="TreeGrafter"/>
</dbReference>
<dbReference type="GO" id="GO:0051301">
    <property type="term" value="P:cell division"/>
    <property type="evidence" value="ECO:0007669"/>
    <property type="project" value="UniProtKB-KW"/>
</dbReference>
<dbReference type="GO" id="GO:0061077">
    <property type="term" value="P:chaperone-mediated protein folding"/>
    <property type="evidence" value="ECO:0007669"/>
    <property type="project" value="TreeGrafter"/>
</dbReference>
<dbReference type="GO" id="GO:0015031">
    <property type="term" value="P:protein transport"/>
    <property type="evidence" value="ECO:0007669"/>
    <property type="project" value="UniProtKB-UniRule"/>
</dbReference>
<dbReference type="GO" id="GO:0043335">
    <property type="term" value="P:protein unfolding"/>
    <property type="evidence" value="ECO:0007669"/>
    <property type="project" value="TreeGrafter"/>
</dbReference>
<dbReference type="FunFam" id="3.10.50.40:FF:000001">
    <property type="entry name" value="Trigger factor"/>
    <property type="match status" value="1"/>
</dbReference>
<dbReference type="Gene3D" id="3.10.50.40">
    <property type="match status" value="1"/>
</dbReference>
<dbReference type="Gene3D" id="3.30.70.1050">
    <property type="entry name" value="Trigger factor ribosome-binding domain"/>
    <property type="match status" value="1"/>
</dbReference>
<dbReference type="Gene3D" id="1.10.3120.10">
    <property type="entry name" value="Trigger factor, C-terminal domain"/>
    <property type="match status" value="1"/>
</dbReference>
<dbReference type="HAMAP" id="MF_00303">
    <property type="entry name" value="Trigger_factor_Tig"/>
    <property type="match status" value="1"/>
</dbReference>
<dbReference type="InterPro" id="IPR046357">
    <property type="entry name" value="PPIase_dom_sf"/>
</dbReference>
<dbReference type="InterPro" id="IPR001179">
    <property type="entry name" value="PPIase_FKBP_dom"/>
</dbReference>
<dbReference type="InterPro" id="IPR005215">
    <property type="entry name" value="Trig_fac"/>
</dbReference>
<dbReference type="InterPro" id="IPR008880">
    <property type="entry name" value="Trigger_fac_C"/>
</dbReference>
<dbReference type="InterPro" id="IPR037041">
    <property type="entry name" value="Trigger_fac_C_sf"/>
</dbReference>
<dbReference type="InterPro" id="IPR008881">
    <property type="entry name" value="Trigger_fac_ribosome-bd_bac"/>
</dbReference>
<dbReference type="InterPro" id="IPR036611">
    <property type="entry name" value="Trigger_fac_ribosome-bd_sf"/>
</dbReference>
<dbReference type="InterPro" id="IPR027304">
    <property type="entry name" value="Trigger_fact/SurA_dom_sf"/>
</dbReference>
<dbReference type="NCBIfam" id="TIGR00115">
    <property type="entry name" value="tig"/>
    <property type="match status" value="1"/>
</dbReference>
<dbReference type="PANTHER" id="PTHR30560">
    <property type="entry name" value="TRIGGER FACTOR CHAPERONE AND PEPTIDYL-PROLYL CIS/TRANS ISOMERASE"/>
    <property type="match status" value="1"/>
</dbReference>
<dbReference type="PANTHER" id="PTHR30560:SF3">
    <property type="entry name" value="TRIGGER FACTOR-LIKE PROTEIN TIG, CHLOROPLASTIC"/>
    <property type="match status" value="1"/>
</dbReference>
<dbReference type="Pfam" id="PF00254">
    <property type="entry name" value="FKBP_C"/>
    <property type="match status" value="1"/>
</dbReference>
<dbReference type="Pfam" id="PF05698">
    <property type="entry name" value="Trigger_C"/>
    <property type="match status" value="1"/>
</dbReference>
<dbReference type="Pfam" id="PF05697">
    <property type="entry name" value="Trigger_N"/>
    <property type="match status" value="1"/>
</dbReference>
<dbReference type="PIRSF" id="PIRSF003095">
    <property type="entry name" value="Trigger_factor"/>
    <property type="match status" value="1"/>
</dbReference>
<dbReference type="SUPFAM" id="SSF54534">
    <property type="entry name" value="FKBP-like"/>
    <property type="match status" value="1"/>
</dbReference>
<dbReference type="SUPFAM" id="SSF109998">
    <property type="entry name" value="Triger factor/SurA peptide-binding domain-like"/>
    <property type="match status" value="1"/>
</dbReference>
<dbReference type="SUPFAM" id="SSF102735">
    <property type="entry name" value="Trigger factor ribosome-binding domain"/>
    <property type="match status" value="1"/>
</dbReference>
<dbReference type="PROSITE" id="PS50059">
    <property type="entry name" value="FKBP_PPIASE"/>
    <property type="match status" value="1"/>
</dbReference>
<accession>B2GBC3</accession>
<reference key="1">
    <citation type="journal article" date="2008" name="DNA Res.">
        <title>Comparative genome analysis of Lactobacillus reuteri and Lactobacillus fermentum reveal a genomic island for reuterin and cobalamin production.</title>
        <authorList>
            <person name="Morita H."/>
            <person name="Toh H."/>
            <person name="Fukuda S."/>
            <person name="Horikawa H."/>
            <person name="Oshima K."/>
            <person name="Suzuki T."/>
            <person name="Murakami M."/>
            <person name="Hisamatsu S."/>
            <person name="Kato Y."/>
            <person name="Takizawa T."/>
            <person name="Fukuoka H."/>
            <person name="Yoshimura T."/>
            <person name="Itoh K."/>
            <person name="O'Sullivan D.J."/>
            <person name="McKay L.L."/>
            <person name="Ohno H."/>
            <person name="Kikuchi J."/>
            <person name="Masaoka T."/>
            <person name="Hattori M."/>
        </authorList>
    </citation>
    <scope>NUCLEOTIDE SEQUENCE [LARGE SCALE GENOMIC DNA]</scope>
    <source>
        <strain>NBRC 3956 / LMG 18251</strain>
    </source>
</reference>
<keyword id="KW-0131">Cell cycle</keyword>
<keyword id="KW-0132">Cell division</keyword>
<keyword id="KW-0143">Chaperone</keyword>
<keyword id="KW-0963">Cytoplasm</keyword>
<keyword id="KW-0413">Isomerase</keyword>
<keyword id="KW-1185">Reference proteome</keyword>
<keyword id="KW-0697">Rotamase</keyword>
<protein>
    <recommendedName>
        <fullName evidence="1">Trigger factor</fullName>
        <shortName evidence="1">TF</shortName>
        <ecNumber evidence="1">5.2.1.8</ecNumber>
    </recommendedName>
    <alternativeName>
        <fullName evidence="1">PPIase</fullName>
    </alternativeName>
</protein>
<comment type="function">
    <text evidence="1">Involved in protein export. Acts as a chaperone by maintaining the newly synthesized protein in an open conformation. Functions as a peptidyl-prolyl cis-trans isomerase.</text>
</comment>
<comment type="catalytic activity">
    <reaction evidence="1">
        <text>[protein]-peptidylproline (omega=180) = [protein]-peptidylproline (omega=0)</text>
        <dbReference type="Rhea" id="RHEA:16237"/>
        <dbReference type="Rhea" id="RHEA-COMP:10747"/>
        <dbReference type="Rhea" id="RHEA-COMP:10748"/>
        <dbReference type="ChEBI" id="CHEBI:83833"/>
        <dbReference type="ChEBI" id="CHEBI:83834"/>
        <dbReference type="EC" id="5.2.1.8"/>
    </reaction>
</comment>
<comment type="subcellular location">
    <subcellularLocation>
        <location>Cytoplasm</location>
    </subcellularLocation>
    <text evidence="1">About half TF is bound to the ribosome near the polypeptide exit tunnel while the other half is free in the cytoplasm.</text>
</comment>
<comment type="domain">
    <text evidence="1">Consists of 3 domains; the N-terminus binds the ribosome, the middle domain has PPIase activity, while the C-terminus has intrinsic chaperone activity on its own.</text>
</comment>
<comment type="similarity">
    <text evidence="1">Belongs to the FKBP-type PPIase family. Tig subfamily.</text>
</comment>
<organism>
    <name type="scientific">Limosilactobacillus fermentum (strain NBRC 3956 / LMG 18251)</name>
    <name type="common">Lactobacillus fermentum</name>
    <dbReference type="NCBI Taxonomy" id="334390"/>
    <lineage>
        <taxon>Bacteria</taxon>
        <taxon>Bacillati</taxon>
        <taxon>Bacillota</taxon>
        <taxon>Bacilli</taxon>
        <taxon>Lactobacillales</taxon>
        <taxon>Lactobacillaceae</taxon>
        <taxon>Limosilactobacillus</taxon>
    </lineage>
</organism>
<sequence length="435" mass="48034">MSVKWERDSDAPKGTLTFDIDTETIQKGIDHAFTRTQKRISVPGFRKGHVPRTIFNQMYGEESLYQDALNDVLPDAYEAAIKEAGIEPVDQPQVNVESMEKGQPWTLTATVAVKPEVTLGDYKGMEVPEQDTSVSDADVDSELENKRQQQAELVLKEDEAAADGDTVVIDYEGSVDGEKFDGGSADNYSLVLGSGSFIPGFEDQLVGHKAGEDVDVNVTFPEDYHAKDLAGKDALFKVKIHEVKEKQLPELDDEFAKDVDEDVETLAELKDKVKKQLQDQKEAAAKAAIEDAAIEAAVANAETEEIPQAMLDDDTNRQLQQYLAGMQQQGINPQMYFQITNTTEDDLRKQFADDAAKRVKTNLVLEAVVKDANLNATDEDVQNEIADLAKQYGMDEEAVSKALTRDMLEHDIEIKKAVDLIADSAKQTAKAADKD</sequence>
<proteinExistence type="inferred from homology"/>
<feature type="chain" id="PRO_1000115547" description="Trigger factor">
    <location>
        <begin position="1"/>
        <end position="435"/>
    </location>
</feature>
<feature type="domain" description="PPIase FKBP-type" evidence="1">
    <location>
        <begin position="164"/>
        <end position="249"/>
    </location>
</feature>
<feature type="region of interest" description="Disordered" evidence="2">
    <location>
        <begin position="125"/>
        <end position="147"/>
    </location>
</feature>
<evidence type="ECO:0000255" key="1">
    <source>
        <dbReference type="HAMAP-Rule" id="MF_00303"/>
    </source>
</evidence>
<evidence type="ECO:0000256" key="2">
    <source>
        <dbReference type="SAM" id="MobiDB-lite"/>
    </source>
</evidence>
<name>TIG_LIMF3</name>